<protein>
    <recommendedName>
        <fullName evidence="1">Co-chaperonin GroES</fullName>
    </recommendedName>
    <alternativeName>
        <fullName evidence="1">10 kDa chaperonin</fullName>
    </alternativeName>
    <alternativeName>
        <fullName evidence="1">Chaperonin-10</fullName>
        <shortName evidence="1">Cpn10</shortName>
    </alternativeName>
</protein>
<name>CH10_YERPG</name>
<organism>
    <name type="scientific">Yersinia pestis bv. Antiqua (strain Angola)</name>
    <dbReference type="NCBI Taxonomy" id="349746"/>
    <lineage>
        <taxon>Bacteria</taxon>
        <taxon>Pseudomonadati</taxon>
        <taxon>Pseudomonadota</taxon>
        <taxon>Gammaproteobacteria</taxon>
        <taxon>Enterobacterales</taxon>
        <taxon>Yersiniaceae</taxon>
        <taxon>Yersinia</taxon>
    </lineage>
</organism>
<keyword id="KW-0143">Chaperone</keyword>
<keyword id="KW-0963">Cytoplasm</keyword>
<feature type="chain" id="PRO_1000129730" description="Co-chaperonin GroES">
    <location>
        <begin position="1"/>
        <end position="97"/>
    </location>
</feature>
<evidence type="ECO:0000255" key="1">
    <source>
        <dbReference type="HAMAP-Rule" id="MF_00580"/>
    </source>
</evidence>
<dbReference type="EMBL" id="CP000901">
    <property type="protein sequence ID" value="ABX84890.1"/>
    <property type="molecule type" value="Genomic_DNA"/>
</dbReference>
<dbReference type="RefSeq" id="WP_002209127.1">
    <property type="nucleotide sequence ID" value="NZ_CP009935.1"/>
</dbReference>
<dbReference type="SMR" id="A9QYQ2"/>
<dbReference type="KEGG" id="ypg:YpAngola_A0723"/>
<dbReference type="PATRIC" id="fig|349746.12.peg.1670"/>
<dbReference type="GO" id="GO:0005737">
    <property type="term" value="C:cytoplasm"/>
    <property type="evidence" value="ECO:0007669"/>
    <property type="project" value="UniProtKB-SubCell"/>
</dbReference>
<dbReference type="GO" id="GO:0005524">
    <property type="term" value="F:ATP binding"/>
    <property type="evidence" value="ECO:0007669"/>
    <property type="project" value="InterPro"/>
</dbReference>
<dbReference type="GO" id="GO:0046872">
    <property type="term" value="F:metal ion binding"/>
    <property type="evidence" value="ECO:0007669"/>
    <property type="project" value="TreeGrafter"/>
</dbReference>
<dbReference type="GO" id="GO:0044183">
    <property type="term" value="F:protein folding chaperone"/>
    <property type="evidence" value="ECO:0007669"/>
    <property type="project" value="InterPro"/>
</dbReference>
<dbReference type="GO" id="GO:0051087">
    <property type="term" value="F:protein-folding chaperone binding"/>
    <property type="evidence" value="ECO:0007669"/>
    <property type="project" value="TreeGrafter"/>
</dbReference>
<dbReference type="GO" id="GO:0051082">
    <property type="term" value="F:unfolded protein binding"/>
    <property type="evidence" value="ECO:0007669"/>
    <property type="project" value="TreeGrafter"/>
</dbReference>
<dbReference type="GO" id="GO:0051085">
    <property type="term" value="P:chaperone cofactor-dependent protein refolding"/>
    <property type="evidence" value="ECO:0007669"/>
    <property type="project" value="TreeGrafter"/>
</dbReference>
<dbReference type="CDD" id="cd00320">
    <property type="entry name" value="cpn10"/>
    <property type="match status" value="1"/>
</dbReference>
<dbReference type="FunFam" id="2.30.33.40:FF:000001">
    <property type="entry name" value="10 kDa chaperonin"/>
    <property type="match status" value="1"/>
</dbReference>
<dbReference type="Gene3D" id="2.30.33.40">
    <property type="entry name" value="GroES chaperonin"/>
    <property type="match status" value="1"/>
</dbReference>
<dbReference type="HAMAP" id="MF_00580">
    <property type="entry name" value="CH10"/>
    <property type="match status" value="1"/>
</dbReference>
<dbReference type="InterPro" id="IPR020818">
    <property type="entry name" value="Chaperonin_GroES"/>
</dbReference>
<dbReference type="InterPro" id="IPR037124">
    <property type="entry name" value="Chaperonin_GroES_sf"/>
</dbReference>
<dbReference type="InterPro" id="IPR018369">
    <property type="entry name" value="Chaprnonin_Cpn10_CS"/>
</dbReference>
<dbReference type="InterPro" id="IPR011032">
    <property type="entry name" value="GroES-like_sf"/>
</dbReference>
<dbReference type="NCBIfam" id="NF001526">
    <property type="entry name" value="PRK00364.1-1"/>
    <property type="match status" value="1"/>
</dbReference>
<dbReference type="NCBIfam" id="NF001527">
    <property type="entry name" value="PRK00364.1-2"/>
    <property type="match status" value="1"/>
</dbReference>
<dbReference type="NCBIfam" id="NF001531">
    <property type="entry name" value="PRK00364.2-2"/>
    <property type="match status" value="1"/>
</dbReference>
<dbReference type="PANTHER" id="PTHR10772">
    <property type="entry name" value="10 KDA HEAT SHOCK PROTEIN"/>
    <property type="match status" value="1"/>
</dbReference>
<dbReference type="PANTHER" id="PTHR10772:SF58">
    <property type="entry name" value="CO-CHAPERONIN GROES"/>
    <property type="match status" value="1"/>
</dbReference>
<dbReference type="Pfam" id="PF00166">
    <property type="entry name" value="Cpn10"/>
    <property type="match status" value="1"/>
</dbReference>
<dbReference type="PRINTS" id="PR00297">
    <property type="entry name" value="CHAPERONIN10"/>
</dbReference>
<dbReference type="SMART" id="SM00883">
    <property type="entry name" value="Cpn10"/>
    <property type="match status" value="1"/>
</dbReference>
<dbReference type="SUPFAM" id="SSF50129">
    <property type="entry name" value="GroES-like"/>
    <property type="match status" value="1"/>
</dbReference>
<dbReference type="PROSITE" id="PS00681">
    <property type="entry name" value="CHAPERONINS_CPN10"/>
    <property type="match status" value="1"/>
</dbReference>
<sequence>MKIRPLHDRVIVKRKEVESKSAGGIVLTGTAAGKSTRGEVLAVGNGRILDNGEIKPLDVKVGDVVIFNDGYGVKAEKIDNEEVLIMSESDILAIVEA</sequence>
<gene>
    <name evidence="1" type="primary">groES</name>
    <name evidence="1" type="synonym">groS</name>
    <name type="ordered locus">YpAngola_A0723</name>
</gene>
<reference key="1">
    <citation type="journal article" date="2010" name="J. Bacteriol.">
        <title>Genome sequence of the deep-rooted Yersinia pestis strain Angola reveals new insights into the evolution and pangenome of the plague bacterium.</title>
        <authorList>
            <person name="Eppinger M."/>
            <person name="Worsham P.L."/>
            <person name="Nikolich M.P."/>
            <person name="Riley D.R."/>
            <person name="Sebastian Y."/>
            <person name="Mou S."/>
            <person name="Achtman M."/>
            <person name="Lindler L.E."/>
            <person name="Ravel J."/>
        </authorList>
    </citation>
    <scope>NUCLEOTIDE SEQUENCE [LARGE SCALE GENOMIC DNA]</scope>
    <source>
        <strain>Angola</strain>
    </source>
</reference>
<comment type="function">
    <text evidence="1">Together with the chaperonin GroEL, plays an essential role in assisting protein folding. The GroEL-GroES system forms a nano-cage that allows encapsulation of the non-native substrate proteins and provides a physical environment optimized to promote and accelerate protein folding. GroES binds to the apical surface of the GroEL ring, thereby capping the opening of the GroEL channel.</text>
</comment>
<comment type="subunit">
    <text evidence="1">Heptamer of 7 subunits arranged in a ring. Interacts with the chaperonin GroEL.</text>
</comment>
<comment type="subcellular location">
    <subcellularLocation>
        <location evidence="1">Cytoplasm</location>
    </subcellularLocation>
</comment>
<comment type="similarity">
    <text evidence="1">Belongs to the GroES chaperonin family.</text>
</comment>
<accession>A9QYQ2</accession>
<proteinExistence type="inferred from homology"/>